<keyword id="KW-0378">Hydrolase</keyword>
<keyword id="KW-0479">Metal-binding</keyword>
<keyword id="KW-0482">Metalloprotease</keyword>
<keyword id="KW-0645">Protease</keyword>
<keyword id="KW-1185">Reference proteome</keyword>
<keyword id="KW-0862">Zinc</keyword>
<organism>
    <name type="scientific">Actinobacillus pleuropneumoniae serotype 5b (strain L20)</name>
    <dbReference type="NCBI Taxonomy" id="416269"/>
    <lineage>
        <taxon>Bacteria</taxon>
        <taxon>Pseudomonadati</taxon>
        <taxon>Pseudomonadota</taxon>
        <taxon>Gammaproteobacteria</taxon>
        <taxon>Pasteurellales</taxon>
        <taxon>Pasteurellaceae</taxon>
        <taxon>Actinobacillus</taxon>
    </lineage>
</organism>
<protein>
    <recommendedName>
        <fullName>UPF0758 protein APL_1970</fullName>
    </recommendedName>
</protein>
<evidence type="ECO:0000255" key="1">
    <source>
        <dbReference type="PROSITE-ProRule" id="PRU01182"/>
    </source>
</evidence>
<evidence type="ECO:0000305" key="2"/>
<accession>A3N3Q8</accession>
<name>Y1970_ACTP2</name>
<dbReference type="EMBL" id="CP000569">
    <property type="protein sequence ID" value="ABN75044.1"/>
    <property type="molecule type" value="Genomic_DNA"/>
</dbReference>
<dbReference type="SMR" id="A3N3Q8"/>
<dbReference type="STRING" id="416269.APL_1970"/>
<dbReference type="EnsemblBacteria" id="ABN75044">
    <property type="protein sequence ID" value="ABN75044"/>
    <property type="gene ID" value="APL_1970"/>
</dbReference>
<dbReference type="KEGG" id="apl:APL_1970"/>
<dbReference type="eggNOG" id="COG2003">
    <property type="taxonomic scope" value="Bacteria"/>
</dbReference>
<dbReference type="HOGENOM" id="CLU_073529_0_1_6"/>
<dbReference type="Proteomes" id="UP000001432">
    <property type="component" value="Chromosome"/>
</dbReference>
<dbReference type="GO" id="GO:0046872">
    <property type="term" value="F:metal ion binding"/>
    <property type="evidence" value="ECO:0007669"/>
    <property type="project" value="UniProtKB-KW"/>
</dbReference>
<dbReference type="GO" id="GO:0008237">
    <property type="term" value="F:metallopeptidase activity"/>
    <property type="evidence" value="ECO:0007669"/>
    <property type="project" value="UniProtKB-KW"/>
</dbReference>
<dbReference type="GO" id="GO:0006508">
    <property type="term" value="P:proteolysis"/>
    <property type="evidence" value="ECO:0007669"/>
    <property type="project" value="UniProtKB-KW"/>
</dbReference>
<dbReference type="CDD" id="cd08071">
    <property type="entry name" value="MPN_DUF2466"/>
    <property type="match status" value="1"/>
</dbReference>
<dbReference type="Gene3D" id="3.40.140.10">
    <property type="entry name" value="Cytidine Deaminase, domain 2"/>
    <property type="match status" value="1"/>
</dbReference>
<dbReference type="InterPro" id="IPR037518">
    <property type="entry name" value="MPN"/>
</dbReference>
<dbReference type="InterPro" id="IPR025657">
    <property type="entry name" value="RadC_JAB"/>
</dbReference>
<dbReference type="InterPro" id="IPR010994">
    <property type="entry name" value="RuvA_2-like"/>
</dbReference>
<dbReference type="InterPro" id="IPR001405">
    <property type="entry name" value="UPF0758"/>
</dbReference>
<dbReference type="InterPro" id="IPR020891">
    <property type="entry name" value="UPF0758_CS"/>
</dbReference>
<dbReference type="InterPro" id="IPR046778">
    <property type="entry name" value="UPF0758_N"/>
</dbReference>
<dbReference type="NCBIfam" id="NF000642">
    <property type="entry name" value="PRK00024.1"/>
    <property type="match status" value="1"/>
</dbReference>
<dbReference type="NCBIfam" id="TIGR00608">
    <property type="entry name" value="radc"/>
    <property type="match status" value="1"/>
</dbReference>
<dbReference type="PANTHER" id="PTHR30471">
    <property type="entry name" value="DNA REPAIR PROTEIN RADC"/>
    <property type="match status" value="1"/>
</dbReference>
<dbReference type="PANTHER" id="PTHR30471:SF3">
    <property type="entry name" value="UPF0758 PROTEIN YEES-RELATED"/>
    <property type="match status" value="1"/>
</dbReference>
<dbReference type="Pfam" id="PF04002">
    <property type="entry name" value="RadC"/>
    <property type="match status" value="1"/>
</dbReference>
<dbReference type="Pfam" id="PF20582">
    <property type="entry name" value="UPF0758_N"/>
    <property type="match status" value="1"/>
</dbReference>
<dbReference type="SUPFAM" id="SSF102712">
    <property type="entry name" value="JAB1/MPN domain"/>
    <property type="match status" value="1"/>
</dbReference>
<dbReference type="SUPFAM" id="SSF47781">
    <property type="entry name" value="RuvA domain 2-like"/>
    <property type="match status" value="1"/>
</dbReference>
<dbReference type="PROSITE" id="PS50249">
    <property type="entry name" value="MPN"/>
    <property type="match status" value="1"/>
</dbReference>
<dbReference type="PROSITE" id="PS01302">
    <property type="entry name" value="UPF0758"/>
    <property type="match status" value="1"/>
</dbReference>
<proteinExistence type="inferred from homology"/>
<sequence length="220" mass="25014">MDNVVLMPREKLLASGAESLTDQELLAIFLRTGIKGMPVMQLSQEVLNGFGSLRELLSADLATFCRMKGLGQTQFIQLQASKEMTKRYLAQQMQVRENINEPYLAVMCFQAELESEEREVFMVMFLDNQNRLIKKEKMFYGTINQATVYPREIIKEALKCNAAAIIVAHNHPSGNCTPSESDRALTKKLEMACDLVGIRFVDHIVVGKGDYFSFEEEKFR</sequence>
<feature type="chain" id="PRO_1000001640" description="UPF0758 protein APL_1970">
    <location>
        <begin position="1"/>
        <end position="220"/>
    </location>
</feature>
<feature type="domain" description="MPN" evidence="1">
    <location>
        <begin position="98"/>
        <end position="220"/>
    </location>
</feature>
<feature type="short sequence motif" description="JAMM motif" evidence="1">
    <location>
        <begin position="169"/>
        <end position="182"/>
    </location>
</feature>
<feature type="binding site" evidence="1">
    <location>
        <position position="169"/>
    </location>
    <ligand>
        <name>Zn(2+)</name>
        <dbReference type="ChEBI" id="CHEBI:29105"/>
        <note>catalytic</note>
    </ligand>
</feature>
<feature type="binding site" evidence="1">
    <location>
        <position position="171"/>
    </location>
    <ligand>
        <name>Zn(2+)</name>
        <dbReference type="ChEBI" id="CHEBI:29105"/>
        <note>catalytic</note>
    </ligand>
</feature>
<feature type="binding site" evidence="1">
    <location>
        <position position="182"/>
    </location>
    <ligand>
        <name>Zn(2+)</name>
        <dbReference type="ChEBI" id="CHEBI:29105"/>
        <note>catalytic</note>
    </ligand>
</feature>
<gene>
    <name type="ordered locus">APL_1970</name>
</gene>
<comment type="similarity">
    <text evidence="2">Belongs to the UPF0758 family.</text>
</comment>
<reference key="1">
    <citation type="journal article" date="2008" name="J. Bacteriol.">
        <title>The complete genome sequence of Actinobacillus pleuropneumoniae L20 (serotype 5b).</title>
        <authorList>
            <person name="Foote S.J."/>
            <person name="Bosse J.T."/>
            <person name="Bouevitch A.B."/>
            <person name="Langford P.R."/>
            <person name="Young N.M."/>
            <person name="Nash J.H.E."/>
        </authorList>
    </citation>
    <scope>NUCLEOTIDE SEQUENCE [LARGE SCALE GENOMIC DNA]</scope>
    <source>
        <strain>L20</strain>
    </source>
</reference>